<keyword id="KW-0249">Electron transport</keyword>
<keyword id="KW-0472">Membrane</keyword>
<keyword id="KW-0496">Mitochondrion</keyword>
<keyword id="KW-0520">NAD</keyword>
<keyword id="KW-0679">Respiratory chain</keyword>
<keyword id="KW-1278">Translocase</keyword>
<keyword id="KW-0812">Transmembrane</keyword>
<keyword id="KW-1133">Transmembrane helix</keyword>
<keyword id="KW-0813">Transport</keyword>
<keyword id="KW-0830">Ubiquinone</keyword>
<dbReference type="EC" id="7.1.1.2"/>
<dbReference type="EMBL" id="Z47547">
    <property type="protein sequence ID" value="CAA87597.1"/>
    <property type="molecule type" value="Genomic_DNA"/>
</dbReference>
<dbReference type="EMBL" id="Z30950">
    <property type="protein sequence ID" value="CAA83211.1"/>
    <property type="molecule type" value="Genomic_DNA"/>
</dbReference>
<dbReference type="PIR" id="S59081">
    <property type="entry name" value="S59081"/>
</dbReference>
<dbReference type="RefSeq" id="NP_062504.1">
    <property type="nucleotide sequence ID" value="NC_001677.2"/>
</dbReference>
<dbReference type="SMR" id="P48930"/>
<dbReference type="GeneID" id="809403"/>
<dbReference type="KEGG" id="ccp:ChcroMp25"/>
<dbReference type="GO" id="GO:0031966">
    <property type="term" value="C:mitochondrial membrane"/>
    <property type="evidence" value="ECO:0007669"/>
    <property type="project" value="UniProtKB-SubCell"/>
</dbReference>
<dbReference type="GO" id="GO:0030964">
    <property type="term" value="C:NADH dehydrogenase complex"/>
    <property type="evidence" value="ECO:0007669"/>
    <property type="project" value="TreeGrafter"/>
</dbReference>
<dbReference type="GO" id="GO:0008137">
    <property type="term" value="F:NADH dehydrogenase (ubiquinone) activity"/>
    <property type="evidence" value="ECO:0007669"/>
    <property type="project" value="UniProtKB-EC"/>
</dbReference>
<dbReference type="GO" id="GO:0042773">
    <property type="term" value="P:ATP synthesis coupled electron transport"/>
    <property type="evidence" value="ECO:0007669"/>
    <property type="project" value="InterPro"/>
</dbReference>
<dbReference type="Gene3D" id="1.10.287.3510">
    <property type="match status" value="1"/>
</dbReference>
<dbReference type="HAMAP" id="MF_01456">
    <property type="entry name" value="NDH1_NuoK"/>
    <property type="match status" value="1"/>
</dbReference>
<dbReference type="InterPro" id="IPR001133">
    <property type="entry name" value="NADH_UbQ_OxRdtase_chain4L/K"/>
</dbReference>
<dbReference type="InterPro" id="IPR039428">
    <property type="entry name" value="NUOK/Mnh_C1-like"/>
</dbReference>
<dbReference type="NCBIfam" id="NF004320">
    <property type="entry name" value="PRK05715.1-2"/>
    <property type="match status" value="1"/>
</dbReference>
<dbReference type="NCBIfam" id="NF004321">
    <property type="entry name" value="PRK05715.1-3"/>
    <property type="match status" value="1"/>
</dbReference>
<dbReference type="NCBIfam" id="NF004323">
    <property type="entry name" value="PRK05715.1-5"/>
    <property type="match status" value="1"/>
</dbReference>
<dbReference type="PANTHER" id="PTHR11434:SF16">
    <property type="entry name" value="NADH-UBIQUINONE OXIDOREDUCTASE CHAIN 4L"/>
    <property type="match status" value="1"/>
</dbReference>
<dbReference type="PANTHER" id="PTHR11434">
    <property type="entry name" value="NADH-UBIQUINONE OXIDOREDUCTASE SUBUNIT ND4L"/>
    <property type="match status" value="1"/>
</dbReference>
<dbReference type="Pfam" id="PF00420">
    <property type="entry name" value="Oxidored_q2"/>
    <property type="match status" value="1"/>
</dbReference>
<proteinExistence type="inferred from homology"/>
<comment type="function">
    <text evidence="1">Core subunit of the mitochondrial membrane respiratory chain NADH dehydrogenase (Complex I) that is believed to belong to the minimal assembly required for catalysis. Complex I functions in the transfer of electrons from NADH to the respiratory chain. The immediate electron acceptor for the enzyme is believed to be ubiquinone (By similarity).</text>
</comment>
<comment type="catalytic activity">
    <reaction>
        <text>a ubiquinone + NADH + 5 H(+)(in) = a ubiquinol + NAD(+) + 4 H(+)(out)</text>
        <dbReference type="Rhea" id="RHEA:29091"/>
        <dbReference type="Rhea" id="RHEA-COMP:9565"/>
        <dbReference type="Rhea" id="RHEA-COMP:9566"/>
        <dbReference type="ChEBI" id="CHEBI:15378"/>
        <dbReference type="ChEBI" id="CHEBI:16389"/>
        <dbReference type="ChEBI" id="CHEBI:17976"/>
        <dbReference type="ChEBI" id="CHEBI:57540"/>
        <dbReference type="ChEBI" id="CHEBI:57945"/>
        <dbReference type="EC" id="7.1.1.2"/>
    </reaction>
</comment>
<comment type="subcellular location">
    <subcellularLocation>
        <location evidence="1">Mitochondrion membrane</location>
        <topology evidence="1">Multi-pass membrane protein</topology>
    </subcellularLocation>
</comment>
<comment type="similarity">
    <text evidence="3">Belongs to the complex I subunit 4L family.</text>
</comment>
<accession>P48930</accession>
<geneLocation type="mitochondrion"/>
<reference key="1">
    <citation type="journal article" date="1995" name="J. Mol. Biol.">
        <title>Complete sequence of the mitochondrial DNA of the rhodophyte Chondrus crispus (Gigartinales). Gene content and genome organization.</title>
        <authorList>
            <person name="Leblanc C."/>
            <person name="Boyen C."/>
            <person name="Richard O."/>
            <person name="Bonnard G."/>
            <person name="Grienenberger J.-M."/>
            <person name="Kloareg B."/>
        </authorList>
    </citation>
    <scope>NUCLEOTIDE SEQUENCE [GENOMIC DNA]</scope>
    <source>
        <tissue>Apices</tissue>
    </source>
</reference>
<reference key="2">
    <citation type="journal article" date="1995" name="J. Mol. Evol.">
        <title>DNA sequence, structure, and phylogenetic relationship of the mitochondrial small-subunit rRNA from the red alga Chondrus crispus (Gigartinales rhodophytes).</title>
        <authorList>
            <person name="Leblanc C."/>
            <person name="Kloareg B."/>
            <person name="Loiseaux-De Goer S."/>
            <person name="Boyen C."/>
        </authorList>
    </citation>
    <scope>NUCLEOTIDE SEQUENCE [GENOMIC DNA]</scope>
    <source>
        <tissue>Apices</tissue>
    </source>
</reference>
<gene>
    <name type="primary">ND4L</name>
    <name type="synonym">NAD4L</name>
</gene>
<sequence length="101" mass="11354">MFQQLNCTNISSLLFLVSLLGIFLNQKNILVMLMSLEMMFLSISFNLIFSSIRLDDIIGQIFSLLILTVAAAESSIGLAILVIYYRIRSTITVELMNLMKG</sequence>
<protein>
    <recommendedName>
        <fullName>NADH-ubiquinone oxidoreductase chain 4L</fullName>
        <ecNumber>7.1.1.2</ecNumber>
    </recommendedName>
    <alternativeName>
        <fullName>NADH dehydrogenase subunit 4L</fullName>
    </alternativeName>
</protein>
<organism>
    <name type="scientific">Chondrus crispus</name>
    <name type="common">Carrageen Irish moss</name>
    <name type="synonym">Polymorpha crispa</name>
    <dbReference type="NCBI Taxonomy" id="2769"/>
    <lineage>
        <taxon>Eukaryota</taxon>
        <taxon>Rhodophyta</taxon>
        <taxon>Florideophyceae</taxon>
        <taxon>Rhodymeniophycidae</taxon>
        <taxon>Gigartinales</taxon>
        <taxon>Gigartinaceae</taxon>
        <taxon>Chondrus</taxon>
    </lineage>
</organism>
<feature type="chain" id="PRO_0000118408" description="NADH-ubiquinone oxidoreductase chain 4L">
    <location>
        <begin position="1"/>
        <end position="101"/>
    </location>
</feature>
<feature type="transmembrane region" description="Helical" evidence="2">
    <location>
        <begin position="5"/>
        <end position="25"/>
    </location>
</feature>
<feature type="transmembrane region" description="Helical" evidence="2">
    <location>
        <begin position="29"/>
        <end position="49"/>
    </location>
</feature>
<feature type="transmembrane region" description="Helical" evidence="2">
    <location>
        <begin position="64"/>
        <end position="84"/>
    </location>
</feature>
<name>NU4LM_CHOCR</name>
<evidence type="ECO:0000250" key="1"/>
<evidence type="ECO:0000255" key="2"/>
<evidence type="ECO:0000305" key="3"/>